<dbReference type="EMBL" id="AY653733">
    <property type="protein sequence ID" value="AAV51102.1"/>
    <property type="molecule type" value="Genomic_DNA"/>
</dbReference>
<dbReference type="SMR" id="Q5UP15"/>
<dbReference type="Proteomes" id="UP000001134">
    <property type="component" value="Genome"/>
</dbReference>
<dbReference type="Gene3D" id="1.25.40.20">
    <property type="entry name" value="Ankyrin repeat-containing domain"/>
    <property type="match status" value="1"/>
</dbReference>
<dbReference type="InterPro" id="IPR002110">
    <property type="entry name" value="Ankyrin_rpt"/>
</dbReference>
<dbReference type="InterPro" id="IPR036770">
    <property type="entry name" value="Ankyrin_rpt-contain_sf"/>
</dbReference>
<dbReference type="PANTHER" id="PTHR24188">
    <property type="entry name" value="ANKYRIN REPEAT PROTEIN"/>
    <property type="match status" value="1"/>
</dbReference>
<dbReference type="PANTHER" id="PTHR24188:SF29">
    <property type="entry name" value="GH09064P"/>
    <property type="match status" value="1"/>
</dbReference>
<dbReference type="Pfam" id="PF12796">
    <property type="entry name" value="Ank_2"/>
    <property type="match status" value="1"/>
</dbReference>
<dbReference type="SMART" id="SM00248">
    <property type="entry name" value="ANK"/>
    <property type="match status" value="4"/>
</dbReference>
<dbReference type="SUPFAM" id="SSF48403">
    <property type="entry name" value="Ankyrin repeat"/>
    <property type="match status" value="1"/>
</dbReference>
<dbReference type="PROSITE" id="PS50297">
    <property type="entry name" value="ANK_REP_REGION"/>
    <property type="match status" value="1"/>
</dbReference>
<dbReference type="PROSITE" id="PS50088">
    <property type="entry name" value="ANK_REPEAT"/>
    <property type="match status" value="3"/>
</dbReference>
<sequence>MSDMYHQLPPEIWVKIMDHLKEVSLLLTNKDFFGLFNLIDVEKNMIEHIVENGYLDVLKYIDSLKNQNKFIVDKEKFSVKSLDKYLIMSCEFGHLEMTKYFVSQGANVKTDNNMPLRLASQNGHIDTIKYLIENSVDVRANNDCALRMASLFGHINVVKYLVDMGADVTSDNNFAIIHTARSGRLELAKYLAEKGADIRASNDSAVIRASERDI</sequence>
<protein>
    <recommendedName>
        <fullName>Putative ankyrin repeat protein R844</fullName>
    </recommendedName>
</protein>
<gene>
    <name type="ordered locus">MIMI_R844</name>
</gene>
<keyword id="KW-0040">ANK repeat</keyword>
<keyword id="KW-1185">Reference proteome</keyword>
<keyword id="KW-0677">Repeat</keyword>
<name>YR844_MIMIV</name>
<proteinExistence type="predicted"/>
<feature type="chain" id="PRO_0000067211" description="Putative ankyrin repeat protein R844">
    <location>
        <begin position="1"/>
        <end position="214"/>
    </location>
</feature>
<feature type="repeat" description="ANK 1">
    <location>
        <begin position="41"/>
        <end position="70"/>
    </location>
</feature>
<feature type="repeat" description="ANK 2">
    <location>
        <begin position="81"/>
        <end position="110"/>
    </location>
</feature>
<feature type="repeat" description="ANK 3">
    <location>
        <begin position="111"/>
        <end position="140"/>
    </location>
</feature>
<feature type="repeat" description="ANK 4">
    <location>
        <begin position="142"/>
        <end position="170"/>
    </location>
</feature>
<feature type="repeat" description="ANK 5">
    <location>
        <begin position="172"/>
        <end position="200"/>
    </location>
</feature>
<reference key="1">
    <citation type="journal article" date="2004" name="Science">
        <title>The 1.2-megabase genome sequence of Mimivirus.</title>
        <authorList>
            <person name="Raoult D."/>
            <person name="Audic S."/>
            <person name="Robert C."/>
            <person name="Abergel C."/>
            <person name="Renesto P."/>
            <person name="Ogata H."/>
            <person name="La Scola B."/>
            <person name="Susan M."/>
            <person name="Claverie J.-M."/>
        </authorList>
    </citation>
    <scope>NUCLEOTIDE SEQUENCE [LARGE SCALE GENOMIC DNA]</scope>
    <source>
        <strain>Rowbotham-Bradford</strain>
    </source>
</reference>
<organism>
    <name type="scientific">Acanthamoeba polyphaga mimivirus</name>
    <name type="common">APMV</name>
    <dbReference type="NCBI Taxonomy" id="212035"/>
    <lineage>
        <taxon>Viruses</taxon>
        <taxon>Varidnaviria</taxon>
        <taxon>Bamfordvirae</taxon>
        <taxon>Nucleocytoviricota</taxon>
        <taxon>Megaviricetes</taxon>
        <taxon>Imitervirales</taxon>
        <taxon>Mimiviridae</taxon>
        <taxon>Megamimivirinae</taxon>
        <taxon>Mimivirus</taxon>
        <taxon>Mimivirus bradfordmassiliense</taxon>
    </lineage>
</organism>
<organismHost>
    <name type="scientific">Acanthamoeba polyphaga</name>
    <name type="common">Amoeba</name>
    <dbReference type="NCBI Taxonomy" id="5757"/>
</organismHost>
<accession>Q5UP15</accession>